<proteinExistence type="inferred from homology"/>
<dbReference type="EC" id="1.1.1.329"/>
<dbReference type="EMBL" id="AJ579650">
    <property type="protein sequence ID" value="CAE22477.1"/>
    <property type="molecule type" value="Genomic_RNA"/>
</dbReference>
<dbReference type="EMBL" id="AJ810851">
    <property type="protein sequence ID" value="CAH18550.1"/>
    <property type="molecule type" value="Genomic_DNA"/>
</dbReference>
<dbReference type="RefSeq" id="WP_253672087.1">
    <property type="nucleotide sequence ID" value="NZ_JAMTCP010000038.1"/>
</dbReference>
<dbReference type="SMR" id="Q2MF22"/>
<dbReference type="UniPathway" id="UPA00907">
    <property type="reaction ID" value="UER00923"/>
</dbReference>
<dbReference type="UniPathway" id="UPA00971"/>
<dbReference type="GO" id="GO:0046872">
    <property type="term" value="F:metal ion binding"/>
    <property type="evidence" value="ECO:0007669"/>
    <property type="project" value="UniProtKB-KW"/>
</dbReference>
<dbReference type="GO" id="GO:0016491">
    <property type="term" value="F:oxidoreductase activity"/>
    <property type="evidence" value="ECO:0007669"/>
    <property type="project" value="UniProtKB-KW"/>
</dbReference>
<dbReference type="Gene3D" id="3.90.180.10">
    <property type="entry name" value="Medium-chain alcohol dehydrogenases, catalytic domain"/>
    <property type="match status" value="1"/>
</dbReference>
<dbReference type="Gene3D" id="3.40.50.720">
    <property type="entry name" value="NAD(P)-binding Rossmann-like Domain"/>
    <property type="match status" value="1"/>
</dbReference>
<dbReference type="InterPro" id="IPR013149">
    <property type="entry name" value="ADH-like_C"/>
</dbReference>
<dbReference type="InterPro" id="IPR013154">
    <property type="entry name" value="ADH-like_N"/>
</dbReference>
<dbReference type="InterPro" id="IPR011032">
    <property type="entry name" value="GroES-like_sf"/>
</dbReference>
<dbReference type="InterPro" id="IPR036291">
    <property type="entry name" value="NAD(P)-bd_dom_sf"/>
</dbReference>
<dbReference type="InterPro" id="IPR020843">
    <property type="entry name" value="PKS_ER"/>
</dbReference>
<dbReference type="InterPro" id="IPR050129">
    <property type="entry name" value="Zn_alcohol_dh"/>
</dbReference>
<dbReference type="PANTHER" id="PTHR43401">
    <property type="entry name" value="L-THREONINE 3-DEHYDROGENASE"/>
    <property type="match status" value="1"/>
</dbReference>
<dbReference type="PANTHER" id="PTHR43401:SF2">
    <property type="entry name" value="L-THREONINE 3-DEHYDROGENASE"/>
    <property type="match status" value="1"/>
</dbReference>
<dbReference type="Pfam" id="PF08240">
    <property type="entry name" value="ADH_N"/>
    <property type="match status" value="1"/>
</dbReference>
<dbReference type="Pfam" id="PF00107">
    <property type="entry name" value="ADH_zinc_N"/>
    <property type="match status" value="1"/>
</dbReference>
<dbReference type="SMART" id="SM00829">
    <property type="entry name" value="PKS_ER"/>
    <property type="match status" value="1"/>
</dbReference>
<dbReference type="SUPFAM" id="SSF50129">
    <property type="entry name" value="GroES-like"/>
    <property type="match status" value="1"/>
</dbReference>
<dbReference type="SUPFAM" id="SSF51735">
    <property type="entry name" value="NAD(P)-binding Rossmann-fold domains"/>
    <property type="match status" value="1"/>
</dbReference>
<accession>Q2MF22</accession>
<accession>Q70IX7</accession>
<reference key="1">
    <citation type="journal article" date="2004" name="FEMS Microbiol. Lett.">
        <title>Isolation and characterization of the tobramycin biosynthetic gene cluster from Streptomyces tenebrarius.</title>
        <authorList>
            <person name="Kharel M.K."/>
            <person name="Basnet D.B."/>
            <person name="Lee H.C."/>
            <person name="Liou K."/>
            <person name="Woo J.S."/>
            <person name="Kim B.-G."/>
            <person name="Sohng J.K."/>
        </authorList>
    </citation>
    <scope>NUCLEOTIDE SEQUENCE [GENOMIC DNA]</scope>
</reference>
<reference key="2">
    <citation type="submission" date="2004-08" db="EMBL/GenBank/DDBJ databases">
        <title>Comparison of the gene clusters for the biosynthesis of the aminoglycoside antibiotics tobramycin-apramycin (Streptomyces tenebrarius DSM 40477), and hygromycin B (Streptomyces hygroscopicus subsp. hygroscopicus DSM 40578).</title>
        <authorList>
            <person name="Aboshanab K.M.A."/>
            <person name="Schmidt-Beissner H."/>
            <person name="Wehmeier U.F."/>
            <person name="Welzel K."/>
            <person name="Vente A."/>
            <person name="Piepersberg W."/>
        </authorList>
    </citation>
    <scope>NUCLEOTIDE SEQUENCE [GENOMIC DNA]</scope>
</reference>
<keyword id="KW-0479">Metal-binding</keyword>
<keyword id="KW-0520">NAD</keyword>
<keyword id="KW-0521">NADP</keyword>
<keyword id="KW-0560">Oxidoreductase</keyword>
<keyword id="KW-0862">Zinc</keyword>
<name>DOIAD_STRSD</name>
<comment type="function">
    <text evidence="1">Catalyzes the oxidation of 2-deoxy-scyllo-inosamine (DOIA) with NAD(+) or NADP(+), forming 3-amino-2,3-dideoxy-scyllo-inosose (amino-DOI).</text>
</comment>
<comment type="catalytic activity">
    <reaction>
        <text>2-deoxy-scyllo-inosamine + NADP(+) = 3-amino-2,3-dideoxy-scyllo-inosose + NADPH + H(+)</text>
        <dbReference type="Rhea" id="RHEA:33879"/>
        <dbReference type="ChEBI" id="CHEBI:15378"/>
        <dbReference type="ChEBI" id="CHEBI:57783"/>
        <dbReference type="ChEBI" id="CHEBI:58349"/>
        <dbReference type="ChEBI" id="CHEBI:65002"/>
        <dbReference type="ChEBI" id="CHEBI:65003"/>
        <dbReference type="EC" id="1.1.1.329"/>
    </reaction>
</comment>
<comment type="catalytic activity">
    <reaction>
        <text>2-deoxy-scyllo-inosamine + NAD(+) = 3-amino-2,3-dideoxy-scyllo-inosose + NADH + H(+)</text>
        <dbReference type="Rhea" id="RHEA:33883"/>
        <dbReference type="ChEBI" id="CHEBI:15378"/>
        <dbReference type="ChEBI" id="CHEBI:57540"/>
        <dbReference type="ChEBI" id="CHEBI:57945"/>
        <dbReference type="ChEBI" id="CHEBI:65002"/>
        <dbReference type="ChEBI" id="CHEBI:65003"/>
        <dbReference type="EC" id="1.1.1.329"/>
    </reaction>
</comment>
<comment type="cofactor">
    <cofactor evidence="1">
        <name>Zn(2+)</name>
        <dbReference type="ChEBI" id="CHEBI:29105"/>
    </cofactor>
    <text evidence="1">Binds 2 Zn(2+) ions per subunit.</text>
</comment>
<comment type="pathway">
    <text>Metabolic intermediate biosynthesis; 2-deoxystreptamine biosynthesis; 2-deoxystreptamine from D-glucose 6-phosphate: step 3/4.</text>
</comment>
<comment type="pathway">
    <text>Antibiotic biosynthesis; tobramycin biosynthesis.</text>
</comment>
<comment type="similarity">
    <text evidence="2">Belongs to the zinc-containing alcohol dehydrogenase family. DOIA dehydrogenase subfamily.</text>
</comment>
<sequence length="339" mass="35377">MKALSFEAPGEAVFGTREVPVPAPGEALIHLGYNSICGSDLSLYRGVWHGFSYPVVPGHEWSGTVVEVNGPGAELVGRDVVGDLTCACGSCAACGRGTPVLCENLQELGFTRDGACAEYMTIPTGNLHVLPEGLSLRAACQVEPVAVALHAVSTVGVEPGERVAVLGAGGIGLMLMQVARQRGGVITTVGEPVAERRAVAAQLGARTVTTGRPGELAELVAKHPDLTPDVVLEASGYPVAVQEAIEVVRPGGRIGLVGYRVEEVGPMATHHVAVKALTIRGSLGPGGRFPEAIDLLARGEIEVEPLLSHEFALDDHARALDLALRRAEGNVRSFFNLRA</sequence>
<gene>
    <name type="primary">tobE</name>
    <name type="synonym">tacD</name>
</gene>
<organism>
    <name type="scientific">Streptoalloteichus tenebrarius (strain ATCC 17920 / DSM 40477 / JCM 4838 / CBS 697.72 / NBRC 16177 / NCIMB 11028 / NRRL B-12390 / A12253. 1 / ISP 5477)</name>
    <name type="common">Streptomyces tenebrarius</name>
    <dbReference type="NCBI Taxonomy" id="1933"/>
    <lineage>
        <taxon>Bacteria</taxon>
        <taxon>Bacillati</taxon>
        <taxon>Actinomycetota</taxon>
        <taxon>Actinomycetes</taxon>
        <taxon>Pseudonocardiales</taxon>
        <taxon>Pseudonocardiaceae</taxon>
        <taxon>Streptoalloteichus</taxon>
    </lineage>
</organism>
<protein>
    <recommendedName>
        <fullName>2-deoxy-scyllo-inosamine dehydrogenase</fullName>
        <shortName>DOIA dehydrogenase</shortName>
        <ecNumber>1.1.1.329</ecNumber>
    </recommendedName>
</protein>
<evidence type="ECO:0000250" key="1"/>
<evidence type="ECO:0000305" key="2"/>
<feature type="chain" id="PRO_0000234048" description="2-deoxy-scyllo-inosamine dehydrogenase">
    <location>
        <begin position="1"/>
        <end position="339"/>
    </location>
</feature>
<feature type="binding site" evidence="1">
    <location>
        <position position="37"/>
    </location>
    <ligand>
        <name>Zn(2+)</name>
        <dbReference type="ChEBI" id="CHEBI:29105"/>
        <label>1</label>
        <note>catalytic</note>
    </ligand>
</feature>
<feature type="binding site" evidence="1">
    <location>
        <position position="59"/>
    </location>
    <ligand>
        <name>Zn(2+)</name>
        <dbReference type="ChEBI" id="CHEBI:29105"/>
        <label>1</label>
        <note>catalytic</note>
    </ligand>
</feature>
<feature type="binding site" evidence="1">
    <location>
        <position position="88"/>
    </location>
    <ligand>
        <name>Zn(2+)</name>
        <dbReference type="ChEBI" id="CHEBI:29105"/>
        <label>2</label>
    </ligand>
</feature>
<feature type="binding site" evidence="1">
    <location>
        <position position="91"/>
    </location>
    <ligand>
        <name>Zn(2+)</name>
        <dbReference type="ChEBI" id="CHEBI:29105"/>
        <label>2</label>
    </ligand>
</feature>
<feature type="binding site" evidence="1">
    <location>
        <position position="94"/>
    </location>
    <ligand>
        <name>Zn(2+)</name>
        <dbReference type="ChEBI" id="CHEBI:29105"/>
        <label>2</label>
    </ligand>
</feature>
<feature type="binding site" evidence="1">
    <location>
        <position position="102"/>
    </location>
    <ligand>
        <name>Zn(2+)</name>
        <dbReference type="ChEBI" id="CHEBI:29105"/>
        <label>2</label>
    </ligand>
</feature>
<feature type="binding site" evidence="1">
    <location>
        <position position="143"/>
    </location>
    <ligand>
        <name>Zn(2+)</name>
        <dbReference type="ChEBI" id="CHEBI:29105"/>
        <label>1</label>
        <note>catalytic</note>
    </ligand>
</feature>